<gene>
    <name evidence="1" type="primary">fhs</name>
    <name type="ordered locus">Cthe_2399</name>
</gene>
<organism>
    <name type="scientific">Acetivibrio thermocellus (strain ATCC 27405 / DSM 1237 / JCM 9322 / NBRC 103400 / NCIMB 10682 / NRRL B-4536 / VPI 7372)</name>
    <name type="common">Clostridium thermocellum</name>
    <dbReference type="NCBI Taxonomy" id="203119"/>
    <lineage>
        <taxon>Bacteria</taxon>
        <taxon>Bacillati</taxon>
        <taxon>Bacillota</taxon>
        <taxon>Clostridia</taxon>
        <taxon>Eubacteriales</taxon>
        <taxon>Oscillospiraceae</taxon>
        <taxon>Acetivibrio</taxon>
    </lineage>
</organism>
<reference key="1">
    <citation type="submission" date="2007-02" db="EMBL/GenBank/DDBJ databases">
        <title>Complete sequence of Clostridium thermocellum ATCC 27405.</title>
        <authorList>
            <consortium name="US DOE Joint Genome Institute"/>
            <person name="Copeland A."/>
            <person name="Lucas S."/>
            <person name="Lapidus A."/>
            <person name="Barry K."/>
            <person name="Detter J.C."/>
            <person name="Glavina del Rio T."/>
            <person name="Hammon N."/>
            <person name="Israni S."/>
            <person name="Dalin E."/>
            <person name="Tice H."/>
            <person name="Pitluck S."/>
            <person name="Chertkov O."/>
            <person name="Brettin T."/>
            <person name="Bruce D."/>
            <person name="Han C."/>
            <person name="Tapia R."/>
            <person name="Gilna P."/>
            <person name="Schmutz J."/>
            <person name="Larimer F."/>
            <person name="Land M."/>
            <person name="Hauser L."/>
            <person name="Kyrpides N."/>
            <person name="Mikhailova N."/>
            <person name="Wu J.H.D."/>
            <person name="Newcomb M."/>
            <person name="Richardson P."/>
        </authorList>
    </citation>
    <scope>NUCLEOTIDE SEQUENCE [LARGE SCALE GENOMIC DNA]</scope>
    <source>
        <strain>ATCC 27405 / DSM 1237 / JCM 9322 / NBRC 103400 / NCIMB 10682 / NRRL B-4536 / VPI 7372</strain>
    </source>
</reference>
<proteinExistence type="inferred from homology"/>
<protein>
    <recommendedName>
        <fullName evidence="1">Formate--tetrahydrofolate ligase</fullName>
        <ecNumber evidence="1">6.3.4.3</ecNumber>
    </recommendedName>
    <alternativeName>
        <fullName evidence="1">Formyltetrahydrofolate synthetase</fullName>
        <shortName evidence="1">FHS</shortName>
        <shortName evidence="1">FTHFS</shortName>
    </alternativeName>
</protein>
<sequence>MLTDIQIAQSCKMKPITQVAAELGIDEEELELYGKYKAKLSDKLWERVKDRPDGKLVLVTAINPTPAGEGKTTTTVGLGQAMARIGKKAVIALREPSLGPVMGIKGGAAGGGYSQVVPMEDINLHFTGDMHAITAANNLLSAAIDNHIQQGNELNIDVRQIIWKRAMDMNDRALRNIVVGLGGKANGVPREDGFQITVASEVMAVLCLSTGLMDLKERLGRILIGYTYDGKPVFAKDLKVNGAMALLLKDAIKPNLVQTLENTPAIVHGGPFANIAHGCNSIVATRLGLKLADYCITEAGFGADLGAEKFFNIKCRYAGLKPDLVVLVATIRALKYNGGVKKENLGIENLPALEKGFVNLEKHIENIRKFQVPLLVAINHFDTDSEAEIEYVKNRCKALNVEVAFSDVFSKGSEGGIELAEKVVKLTETQKSNFKPLYDVNLSIREKIEIIAREIYGADSVNILPAAERAIKKIEELKMDKLPICVAKTQYSLSDDPTLLGRPQGFVITVREIKLSSGAGFIVAITGDIMTMPGLPKVPAAEKIDIDENGVITGLF</sequence>
<name>FTHS_ACET2</name>
<feature type="chain" id="PRO_0000300522" description="Formate--tetrahydrofolate ligase">
    <location>
        <begin position="1"/>
        <end position="556"/>
    </location>
</feature>
<feature type="binding site" evidence="1">
    <location>
        <begin position="65"/>
        <end position="72"/>
    </location>
    <ligand>
        <name>ATP</name>
        <dbReference type="ChEBI" id="CHEBI:30616"/>
    </ligand>
</feature>
<comment type="catalytic activity">
    <reaction evidence="1">
        <text>(6S)-5,6,7,8-tetrahydrofolate + formate + ATP = (6R)-10-formyltetrahydrofolate + ADP + phosphate</text>
        <dbReference type="Rhea" id="RHEA:20221"/>
        <dbReference type="ChEBI" id="CHEBI:15740"/>
        <dbReference type="ChEBI" id="CHEBI:30616"/>
        <dbReference type="ChEBI" id="CHEBI:43474"/>
        <dbReference type="ChEBI" id="CHEBI:57453"/>
        <dbReference type="ChEBI" id="CHEBI:195366"/>
        <dbReference type="ChEBI" id="CHEBI:456216"/>
        <dbReference type="EC" id="6.3.4.3"/>
    </reaction>
</comment>
<comment type="pathway">
    <text evidence="1">One-carbon metabolism; tetrahydrofolate interconversion.</text>
</comment>
<comment type="similarity">
    <text evidence="1">Belongs to the formate--tetrahydrofolate ligase family.</text>
</comment>
<dbReference type="EC" id="6.3.4.3" evidence="1"/>
<dbReference type="EMBL" id="CP000568">
    <property type="protein sequence ID" value="ABN53601.1"/>
    <property type="molecule type" value="Genomic_DNA"/>
</dbReference>
<dbReference type="RefSeq" id="WP_003516448.1">
    <property type="nucleotide sequence ID" value="NC_009012.1"/>
</dbReference>
<dbReference type="SMR" id="A3DI22"/>
<dbReference type="STRING" id="203119.Cthe_2399"/>
<dbReference type="GeneID" id="35804996"/>
<dbReference type="KEGG" id="cth:Cthe_2399"/>
<dbReference type="eggNOG" id="COG2759">
    <property type="taxonomic scope" value="Bacteria"/>
</dbReference>
<dbReference type="HOGENOM" id="CLU_003601_3_3_9"/>
<dbReference type="OrthoDB" id="9761733at2"/>
<dbReference type="UniPathway" id="UPA00193"/>
<dbReference type="Proteomes" id="UP000002145">
    <property type="component" value="Chromosome"/>
</dbReference>
<dbReference type="GO" id="GO:0005524">
    <property type="term" value="F:ATP binding"/>
    <property type="evidence" value="ECO:0007669"/>
    <property type="project" value="UniProtKB-UniRule"/>
</dbReference>
<dbReference type="GO" id="GO:0004329">
    <property type="term" value="F:formate-tetrahydrofolate ligase activity"/>
    <property type="evidence" value="ECO:0007669"/>
    <property type="project" value="UniProtKB-UniRule"/>
</dbReference>
<dbReference type="GO" id="GO:0035999">
    <property type="term" value="P:tetrahydrofolate interconversion"/>
    <property type="evidence" value="ECO:0007669"/>
    <property type="project" value="UniProtKB-UniRule"/>
</dbReference>
<dbReference type="CDD" id="cd00477">
    <property type="entry name" value="FTHFS"/>
    <property type="match status" value="1"/>
</dbReference>
<dbReference type="FunFam" id="3.30.1510.10:FF:000001">
    <property type="entry name" value="Formate--tetrahydrofolate ligase"/>
    <property type="match status" value="1"/>
</dbReference>
<dbReference type="FunFam" id="3.10.410.10:FF:000001">
    <property type="entry name" value="Putative formate--tetrahydrofolate ligase"/>
    <property type="match status" value="1"/>
</dbReference>
<dbReference type="Gene3D" id="3.30.1510.10">
    <property type="entry name" value="Domain 2, N(10)-formyltetrahydrofolate synthetase"/>
    <property type="match status" value="1"/>
</dbReference>
<dbReference type="Gene3D" id="3.10.410.10">
    <property type="entry name" value="Formyltetrahydrofolate synthetase, domain 3"/>
    <property type="match status" value="1"/>
</dbReference>
<dbReference type="Gene3D" id="3.40.50.300">
    <property type="entry name" value="P-loop containing nucleotide triphosphate hydrolases"/>
    <property type="match status" value="1"/>
</dbReference>
<dbReference type="HAMAP" id="MF_01543">
    <property type="entry name" value="FTHFS"/>
    <property type="match status" value="1"/>
</dbReference>
<dbReference type="InterPro" id="IPR000559">
    <property type="entry name" value="Formate_THF_ligase"/>
</dbReference>
<dbReference type="InterPro" id="IPR020628">
    <property type="entry name" value="Formate_THF_ligase_CS"/>
</dbReference>
<dbReference type="InterPro" id="IPR027417">
    <property type="entry name" value="P-loop_NTPase"/>
</dbReference>
<dbReference type="NCBIfam" id="NF010030">
    <property type="entry name" value="PRK13505.1"/>
    <property type="match status" value="1"/>
</dbReference>
<dbReference type="Pfam" id="PF01268">
    <property type="entry name" value="FTHFS"/>
    <property type="match status" value="1"/>
</dbReference>
<dbReference type="SUPFAM" id="SSF52540">
    <property type="entry name" value="P-loop containing nucleoside triphosphate hydrolases"/>
    <property type="match status" value="1"/>
</dbReference>
<dbReference type="PROSITE" id="PS00721">
    <property type="entry name" value="FTHFS_1"/>
    <property type="match status" value="1"/>
</dbReference>
<dbReference type="PROSITE" id="PS00722">
    <property type="entry name" value="FTHFS_2"/>
    <property type="match status" value="1"/>
</dbReference>
<accession>A3DI22</accession>
<keyword id="KW-0067">ATP-binding</keyword>
<keyword id="KW-0436">Ligase</keyword>
<keyword id="KW-0547">Nucleotide-binding</keyword>
<keyword id="KW-0554">One-carbon metabolism</keyword>
<keyword id="KW-1185">Reference proteome</keyword>
<evidence type="ECO:0000255" key="1">
    <source>
        <dbReference type="HAMAP-Rule" id="MF_01543"/>
    </source>
</evidence>